<organism>
    <name type="scientific">Stenotrophomonas maltophilia (strain K279a)</name>
    <dbReference type="NCBI Taxonomy" id="522373"/>
    <lineage>
        <taxon>Bacteria</taxon>
        <taxon>Pseudomonadati</taxon>
        <taxon>Pseudomonadota</taxon>
        <taxon>Gammaproteobacteria</taxon>
        <taxon>Lysobacterales</taxon>
        <taxon>Lysobacteraceae</taxon>
        <taxon>Stenotrophomonas</taxon>
        <taxon>Stenotrophomonas maltophilia group</taxon>
    </lineage>
</organism>
<sequence length="298" mass="32944">MSEQTPHHCGSVAVIGRPNVGKSTLTNALVGAKVSIVSNRPQTTRHRLLGIATYPEGQLVLVDTPGLHKVQKRAMNRVMNRAARGSLEGVDAGLLVIEAGRWDEEDSLAFNVLRDAGIPVVLVVNKIDRLKEKGALLPFLQQVTEGRDFAAVHPISAQKRNGLEALVRDVLKLLPEAPPMFGEDEITDRSQRFLAGELVREQLMRQLGEELPYATTVEIERFTEDGNLLRIGAVIWVEREGQKAIVIGKGGARLKEIGAKSRLQMERLFGAKVFLETWVRVREGWSDDEAALKAFGYE</sequence>
<feature type="chain" id="PRO_1000121358" description="GTPase Era">
    <location>
        <begin position="1"/>
        <end position="298"/>
    </location>
</feature>
<feature type="domain" description="Era-type G" evidence="2">
    <location>
        <begin position="8"/>
        <end position="176"/>
    </location>
</feature>
<feature type="domain" description="KH type-2" evidence="1">
    <location>
        <begin position="199"/>
        <end position="283"/>
    </location>
</feature>
<feature type="region of interest" description="G1" evidence="2">
    <location>
        <begin position="16"/>
        <end position="23"/>
    </location>
</feature>
<feature type="region of interest" description="G2" evidence="2">
    <location>
        <begin position="42"/>
        <end position="46"/>
    </location>
</feature>
<feature type="region of interest" description="G3" evidence="2">
    <location>
        <begin position="63"/>
        <end position="66"/>
    </location>
</feature>
<feature type="region of interest" description="G4" evidence="2">
    <location>
        <begin position="125"/>
        <end position="128"/>
    </location>
</feature>
<feature type="region of interest" description="G5" evidence="2">
    <location>
        <begin position="155"/>
        <end position="157"/>
    </location>
</feature>
<feature type="binding site" evidence="1">
    <location>
        <begin position="16"/>
        <end position="23"/>
    </location>
    <ligand>
        <name>GTP</name>
        <dbReference type="ChEBI" id="CHEBI:37565"/>
    </ligand>
</feature>
<feature type="binding site" evidence="1">
    <location>
        <begin position="63"/>
        <end position="67"/>
    </location>
    <ligand>
        <name>GTP</name>
        <dbReference type="ChEBI" id="CHEBI:37565"/>
    </ligand>
</feature>
<feature type="binding site" evidence="1">
    <location>
        <begin position="125"/>
        <end position="128"/>
    </location>
    <ligand>
        <name>GTP</name>
        <dbReference type="ChEBI" id="CHEBI:37565"/>
    </ligand>
</feature>
<dbReference type="EMBL" id="AM743169">
    <property type="protein sequence ID" value="CAQ46969.1"/>
    <property type="molecule type" value="Genomic_DNA"/>
</dbReference>
<dbReference type="RefSeq" id="WP_005410599.1">
    <property type="nucleotide sequence ID" value="NC_010943.1"/>
</dbReference>
<dbReference type="SMR" id="B2FPX8"/>
<dbReference type="EnsemblBacteria" id="CAQ46969">
    <property type="protein sequence ID" value="CAQ46969"/>
    <property type="gene ID" value="Smlt3548"/>
</dbReference>
<dbReference type="GeneID" id="97262198"/>
<dbReference type="KEGG" id="sml:Smlt3548"/>
<dbReference type="eggNOG" id="COG1159">
    <property type="taxonomic scope" value="Bacteria"/>
</dbReference>
<dbReference type="HOGENOM" id="CLU_038009_1_2_6"/>
<dbReference type="Proteomes" id="UP000008840">
    <property type="component" value="Chromosome"/>
</dbReference>
<dbReference type="GO" id="GO:0005829">
    <property type="term" value="C:cytosol"/>
    <property type="evidence" value="ECO:0007669"/>
    <property type="project" value="TreeGrafter"/>
</dbReference>
<dbReference type="GO" id="GO:0005886">
    <property type="term" value="C:plasma membrane"/>
    <property type="evidence" value="ECO:0007669"/>
    <property type="project" value="UniProtKB-SubCell"/>
</dbReference>
<dbReference type="GO" id="GO:0005525">
    <property type="term" value="F:GTP binding"/>
    <property type="evidence" value="ECO:0007669"/>
    <property type="project" value="UniProtKB-UniRule"/>
</dbReference>
<dbReference type="GO" id="GO:0003924">
    <property type="term" value="F:GTPase activity"/>
    <property type="evidence" value="ECO:0007669"/>
    <property type="project" value="UniProtKB-UniRule"/>
</dbReference>
<dbReference type="GO" id="GO:0043024">
    <property type="term" value="F:ribosomal small subunit binding"/>
    <property type="evidence" value="ECO:0007669"/>
    <property type="project" value="TreeGrafter"/>
</dbReference>
<dbReference type="GO" id="GO:0070181">
    <property type="term" value="F:small ribosomal subunit rRNA binding"/>
    <property type="evidence" value="ECO:0007669"/>
    <property type="project" value="UniProtKB-UniRule"/>
</dbReference>
<dbReference type="GO" id="GO:0000028">
    <property type="term" value="P:ribosomal small subunit assembly"/>
    <property type="evidence" value="ECO:0007669"/>
    <property type="project" value="TreeGrafter"/>
</dbReference>
<dbReference type="CDD" id="cd04163">
    <property type="entry name" value="Era"/>
    <property type="match status" value="1"/>
</dbReference>
<dbReference type="CDD" id="cd22534">
    <property type="entry name" value="KH-II_Era"/>
    <property type="match status" value="1"/>
</dbReference>
<dbReference type="FunFam" id="3.30.300.20:FF:000003">
    <property type="entry name" value="GTPase Era"/>
    <property type="match status" value="1"/>
</dbReference>
<dbReference type="Gene3D" id="3.30.300.20">
    <property type="match status" value="1"/>
</dbReference>
<dbReference type="Gene3D" id="3.40.50.300">
    <property type="entry name" value="P-loop containing nucleotide triphosphate hydrolases"/>
    <property type="match status" value="1"/>
</dbReference>
<dbReference type="HAMAP" id="MF_00367">
    <property type="entry name" value="GTPase_Era"/>
    <property type="match status" value="1"/>
</dbReference>
<dbReference type="InterPro" id="IPR030388">
    <property type="entry name" value="G_ERA_dom"/>
</dbReference>
<dbReference type="InterPro" id="IPR006073">
    <property type="entry name" value="GTP-bd"/>
</dbReference>
<dbReference type="InterPro" id="IPR005662">
    <property type="entry name" value="GTPase_Era-like"/>
</dbReference>
<dbReference type="InterPro" id="IPR015946">
    <property type="entry name" value="KH_dom-like_a/b"/>
</dbReference>
<dbReference type="InterPro" id="IPR004044">
    <property type="entry name" value="KH_dom_type_2"/>
</dbReference>
<dbReference type="InterPro" id="IPR009019">
    <property type="entry name" value="KH_sf_prok-type"/>
</dbReference>
<dbReference type="InterPro" id="IPR027417">
    <property type="entry name" value="P-loop_NTPase"/>
</dbReference>
<dbReference type="InterPro" id="IPR005225">
    <property type="entry name" value="Small_GTP-bd"/>
</dbReference>
<dbReference type="NCBIfam" id="TIGR00436">
    <property type="entry name" value="era"/>
    <property type="match status" value="1"/>
</dbReference>
<dbReference type="NCBIfam" id="NF000908">
    <property type="entry name" value="PRK00089.1"/>
    <property type="match status" value="1"/>
</dbReference>
<dbReference type="NCBIfam" id="TIGR00231">
    <property type="entry name" value="small_GTP"/>
    <property type="match status" value="1"/>
</dbReference>
<dbReference type="PANTHER" id="PTHR42698">
    <property type="entry name" value="GTPASE ERA"/>
    <property type="match status" value="1"/>
</dbReference>
<dbReference type="PANTHER" id="PTHR42698:SF1">
    <property type="entry name" value="GTPASE ERA, MITOCHONDRIAL"/>
    <property type="match status" value="1"/>
</dbReference>
<dbReference type="Pfam" id="PF07650">
    <property type="entry name" value="KH_2"/>
    <property type="match status" value="1"/>
</dbReference>
<dbReference type="Pfam" id="PF01926">
    <property type="entry name" value="MMR_HSR1"/>
    <property type="match status" value="1"/>
</dbReference>
<dbReference type="PRINTS" id="PR00326">
    <property type="entry name" value="GTP1OBG"/>
</dbReference>
<dbReference type="SUPFAM" id="SSF52540">
    <property type="entry name" value="P-loop containing nucleoside triphosphate hydrolases"/>
    <property type="match status" value="1"/>
</dbReference>
<dbReference type="SUPFAM" id="SSF54814">
    <property type="entry name" value="Prokaryotic type KH domain (KH-domain type II)"/>
    <property type="match status" value="1"/>
</dbReference>
<dbReference type="PROSITE" id="PS51713">
    <property type="entry name" value="G_ERA"/>
    <property type="match status" value="1"/>
</dbReference>
<dbReference type="PROSITE" id="PS50823">
    <property type="entry name" value="KH_TYPE_2"/>
    <property type="match status" value="1"/>
</dbReference>
<gene>
    <name evidence="1" type="primary">era</name>
    <name type="ordered locus">Smlt3548</name>
</gene>
<evidence type="ECO:0000255" key="1">
    <source>
        <dbReference type="HAMAP-Rule" id="MF_00367"/>
    </source>
</evidence>
<evidence type="ECO:0000255" key="2">
    <source>
        <dbReference type="PROSITE-ProRule" id="PRU01050"/>
    </source>
</evidence>
<proteinExistence type="inferred from homology"/>
<comment type="function">
    <text evidence="1">An essential GTPase that binds both GDP and GTP, with rapid nucleotide exchange. Plays a role in 16S rRNA processing and 30S ribosomal subunit biogenesis and possibly also in cell cycle regulation and energy metabolism.</text>
</comment>
<comment type="subunit">
    <text evidence="1">Monomer.</text>
</comment>
<comment type="subcellular location">
    <subcellularLocation>
        <location>Cytoplasm</location>
    </subcellularLocation>
    <subcellularLocation>
        <location evidence="1">Cell inner membrane</location>
        <topology evidence="1">Peripheral membrane protein</topology>
    </subcellularLocation>
</comment>
<comment type="similarity">
    <text evidence="1 2">Belongs to the TRAFAC class TrmE-Era-EngA-EngB-Septin-like GTPase superfamily. Era GTPase family.</text>
</comment>
<name>ERA_STRMK</name>
<accession>B2FPX8</accession>
<protein>
    <recommendedName>
        <fullName evidence="1">GTPase Era</fullName>
    </recommendedName>
</protein>
<reference key="1">
    <citation type="journal article" date="2008" name="Genome Biol.">
        <title>The complete genome, comparative and functional analysis of Stenotrophomonas maltophilia reveals an organism heavily shielded by drug resistance determinants.</title>
        <authorList>
            <person name="Crossman L.C."/>
            <person name="Gould V.C."/>
            <person name="Dow J.M."/>
            <person name="Vernikos G.S."/>
            <person name="Okazaki A."/>
            <person name="Sebaihia M."/>
            <person name="Saunders D."/>
            <person name="Arrowsmith C."/>
            <person name="Carver T."/>
            <person name="Peters N."/>
            <person name="Adlem E."/>
            <person name="Kerhornou A."/>
            <person name="Lord A."/>
            <person name="Murphy L."/>
            <person name="Seeger K."/>
            <person name="Squares R."/>
            <person name="Rutter S."/>
            <person name="Quail M.A."/>
            <person name="Rajandream M.A."/>
            <person name="Harris D."/>
            <person name="Churcher C."/>
            <person name="Bentley S.D."/>
            <person name="Parkhill J."/>
            <person name="Thomson N.R."/>
            <person name="Avison M.B."/>
        </authorList>
    </citation>
    <scope>NUCLEOTIDE SEQUENCE [LARGE SCALE GENOMIC DNA]</scope>
    <source>
        <strain>K279a</strain>
    </source>
</reference>
<keyword id="KW-0997">Cell inner membrane</keyword>
<keyword id="KW-1003">Cell membrane</keyword>
<keyword id="KW-0963">Cytoplasm</keyword>
<keyword id="KW-0342">GTP-binding</keyword>
<keyword id="KW-0472">Membrane</keyword>
<keyword id="KW-0547">Nucleotide-binding</keyword>
<keyword id="KW-1185">Reference proteome</keyword>
<keyword id="KW-0690">Ribosome biogenesis</keyword>
<keyword id="KW-0694">RNA-binding</keyword>
<keyword id="KW-0699">rRNA-binding</keyword>